<accession>Q39ZT0</accession>
<dbReference type="EC" id="3.6.-.-" evidence="1"/>
<dbReference type="EMBL" id="CP000142">
    <property type="protein sequence ID" value="ABA90377.1"/>
    <property type="status" value="ALT_INIT"/>
    <property type="molecule type" value="Genomic_DNA"/>
</dbReference>
<dbReference type="SMR" id="Q39ZT0"/>
<dbReference type="STRING" id="338963.Pcar_3142"/>
<dbReference type="KEGG" id="pca:Pcar_3142"/>
<dbReference type="eggNOG" id="COG0486">
    <property type="taxonomic scope" value="Bacteria"/>
</dbReference>
<dbReference type="HOGENOM" id="CLU_019624_4_1_7"/>
<dbReference type="OrthoDB" id="9805918at2"/>
<dbReference type="Proteomes" id="UP000002534">
    <property type="component" value="Chromosome"/>
</dbReference>
<dbReference type="GO" id="GO:0005829">
    <property type="term" value="C:cytosol"/>
    <property type="evidence" value="ECO:0007669"/>
    <property type="project" value="TreeGrafter"/>
</dbReference>
<dbReference type="GO" id="GO:0005525">
    <property type="term" value="F:GTP binding"/>
    <property type="evidence" value="ECO:0007669"/>
    <property type="project" value="UniProtKB-UniRule"/>
</dbReference>
<dbReference type="GO" id="GO:0003924">
    <property type="term" value="F:GTPase activity"/>
    <property type="evidence" value="ECO:0007669"/>
    <property type="project" value="UniProtKB-UniRule"/>
</dbReference>
<dbReference type="GO" id="GO:0046872">
    <property type="term" value="F:metal ion binding"/>
    <property type="evidence" value="ECO:0007669"/>
    <property type="project" value="UniProtKB-KW"/>
</dbReference>
<dbReference type="GO" id="GO:0030488">
    <property type="term" value="P:tRNA methylation"/>
    <property type="evidence" value="ECO:0007669"/>
    <property type="project" value="TreeGrafter"/>
</dbReference>
<dbReference type="GO" id="GO:0002098">
    <property type="term" value="P:tRNA wobble uridine modification"/>
    <property type="evidence" value="ECO:0007669"/>
    <property type="project" value="TreeGrafter"/>
</dbReference>
<dbReference type="CDD" id="cd04164">
    <property type="entry name" value="trmE"/>
    <property type="match status" value="1"/>
</dbReference>
<dbReference type="CDD" id="cd14858">
    <property type="entry name" value="TrmE_N"/>
    <property type="match status" value="1"/>
</dbReference>
<dbReference type="FunFam" id="3.30.1360.120:FF:000003">
    <property type="entry name" value="tRNA modification GTPase MnmE"/>
    <property type="match status" value="1"/>
</dbReference>
<dbReference type="FunFam" id="3.40.50.300:FF:001376">
    <property type="entry name" value="tRNA modification GTPase MnmE"/>
    <property type="match status" value="1"/>
</dbReference>
<dbReference type="Gene3D" id="3.40.50.300">
    <property type="entry name" value="P-loop containing nucleotide triphosphate hydrolases"/>
    <property type="match status" value="1"/>
</dbReference>
<dbReference type="Gene3D" id="3.30.1360.120">
    <property type="entry name" value="Probable tRNA modification gtpase trme, domain 1"/>
    <property type="match status" value="1"/>
</dbReference>
<dbReference type="Gene3D" id="1.20.120.430">
    <property type="entry name" value="tRNA modification GTPase MnmE domain 2"/>
    <property type="match status" value="1"/>
</dbReference>
<dbReference type="HAMAP" id="MF_00379">
    <property type="entry name" value="GTPase_MnmE"/>
    <property type="match status" value="1"/>
</dbReference>
<dbReference type="InterPro" id="IPR031168">
    <property type="entry name" value="G_TrmE"/>
</dbReference>
<dbReference type="InterPro" id="IPR006073">
    <property type="entry name" value="GTP-bd"/>
</dbReference>
<dbReference type="InterPro" id="IPR018948">
    <property type="entry name" value="GTP-bd_TrmE_N"/>
</dbReference>
<dbReference type="InterPro" id="IPR004520">
    <property type="entry name" value="GTPase_MnmE"/>
</dbReference>
<dbReference type="InterPro" id="IPR027368">
    <property type="entry name" value="MnmE_dom2"/>
</dbReference>
<dbReference type="InterPro" id="IPR025867">
    <property type="entry name" value="MnmE_helical"/>
</dbReference>
<dbReference type="InterPro" id="IPR027417">
    <property type="entry name" value="P-loop_NTPase"/>
</dbReference>
<dbReference type="InterPro" id="IPR005225">
    <property type="entry name" value="Small_GTP-bd"/>
</dbReference>
<dbReference type="InterPro" id="IPR027266">
    <property type="entry name" value="TrmE/GcvT_dom1"/>
</dbReference>
<dbReference type="NCBIfam" id="TIGR00450">
    <property type="entry name" value="mnmE_trmE_thdF"/>
    <property type="match status" value="1"/>
</dbReference>
<dbReference type="NCBIfam" id="NF003661">
    <property type="entry name" value="PRK05291.1-3"/>
    <property type="match status" value="1"/>
</dbReference>
<dbReference type="NCBIfam" id="TIGR00231">
    <property type="entry name" value="small_GTP"/>
    <property type="match status" value="1"/>
</dbReference>
<dbReference type="PANTHER" id="PTHR42714">
    <property type="entry name" value="TRNA MODIFICATION GTPASE GTPBP3"/>
    <property type="match status" value="1"/>
</dbReference>
<dbReference type="PANTHER" id="PTHR42714:SF2">
    <property type="entry name" value="TRNA MODIFICATION GTPASE GTPBP3, MITOCHONDRIAL"/>
    <property type="match status" value="1"/>
</dbReference>
<dbReference type="Pfam" id="PF01926">
    <property type="entry name" value="MMR_HSR1"/>
    <property type="match status" value="1"/>
</dbReference>
<dbReference type="Pfam" id="PF12631">
    <property type="entry name" value="MnmE_helical"/>
    <property type="match status" value="1"/>
</dbReference>
<dbReference type="Pfam" id="PF10396">
    <property type="entry name" value="TrmE_N"/>
    <property type="match status" value="1"/>
</dbReference>
<dbReference type="SUPFAM" id="SSF52540">
    <property type="entry name" value="P-loop containing nucleoside triphosphate hydrolases"/>
    <property type="match status" value="1"/>
</dbReference>
<dbReference type="SUPFAM" id="SSF116878">
    <property type="entry name" value="TrmE connector domain"/>
    <property type="match status" value="1"/>
</dbReference>
<dbReference type="PROSITE" id="PS51709">
    <property type="entry name" value="G_TRME"/>
    <property type="match status" value="1"/>
</dbReference>
<proteinExistence type="inferred from homology"/>
<gene>
    <name evidence="1" type="primary">mnmE</name>
    <name evidence="1" type="synonym">trmE</name>
    <name type="ordered locus">Pcar_3142</name>
</gene>
<evidence type="ECO:0000255" key="1">
    <source>
        <dbReference type="HAMAP-Rule" id="MF_00379"/>
    </source>
</evidence>
<evidence type="ECO:0000305" key="2"/>
<protein>
    <recommendedName>
        <fullName evidence="1">tRNA modification GTPase MnmE</fullName>
        <ecNumber evidence="1">3.6.-.-</ecNumber>
    </recommendedName>
</protein>
<reference key="1">
    <citation type="submission" date="2005-10" db="EMBL/GenBank/DDBJ databases">
        <title>Complete sequence of Pelobacter carbinolicus DSM 2380.</title>
        <authorList>
            <person name="Copeland A."/>
            <person name="Lucas S."/>
            <person name="Lapidus A."/>
            <person name="Barry K."/>
            <person name="Detter J.C."/>
            <person name="Glavina T."/>
            <person name="Hammon N."/>
            <person name="Israni S."/>
            <person name="Pitluck S."/>
            <person name="Chertkov O."/>
            <person name="Schmutz J."/>
            <person name="Larimer F."/>
            <person name="Land M."/>
            <person name="Kyrpides N."/>
            <person name="Ivanova N."/>
            <person name="Richardson P."/>
        </authorList>
    </citation>
    <scope>NUCLEOTIDE SEQUENCE [LARGE SCALE GENOMIC DNA]</scope>
    <source>
        <strain>DSM 2380 / NBRC 103641 / GraBd1</strain>
    </source>
</reference>
<keyword id="KW-0963">Cytoplasm</keyword>
<keyword id="KW-0342">GTP-binding</keyword>
<keyword id="KW-0378">Hydrolase</keyword>
<keyword id="KW-0460">Magnesium</keyword>
<keyword id="KW-0479">Metal-binding</keyword>
<keyword id="KW-0547">Nucleotide-binding</keyword>
<keyword id="KW-0630">Potassium</keyword>
<keyword id="KW-1185">Reference proteome</keyword>
<keyword id="KW-0819">tRNA processing</keyword>
<organism>
    <name type="scientific">Syntrophotalea carbinolica (strain DSM 2380 / NBRC 103641 / GraBd1)</name>
    <name type="common">Pelobacter carbinolicus</name>
    <dbReference type="NCBI Taxonomy" id="338963"/>
    <lineage>
        <taxon>Bacteria</taxon>
        <taxon>Pseudomonadati</taxon>
        <taxon>Thermodesulfobacteriota</taxon>
        <taxon>Desulfuromonadia</taxon>
        <taxon>Desulfuromonadales</taxon>
        <taxon>Syntrophotaleaceae</taxon>
        <taxon>Syntrophotalea</taxon>
    </lineage>
</organism>
<name>MNME_SYNC1</name>
<comment type="function">
    <text evidence="1">Exhibits a very high intrinsic GTPase hydrolysis rate. Involved in the addition of a carboxymethylaminomethyl (cmnm) group at the wobble position (U34) of certain tRNAs, forming tRNA-cmnm(5)s(2)U34.</text>
</comment>
<comment type="cofactor">
    <cofactor evidence="1">
        <name>K(+)</name>
        <dbReference type="ChEBI" id="CHEBI:29103"/>
    </cofactor>
    <text evidence="1">Binds 1 potassium ion per subunit.</text>
</comment>
<comment type="subunit">
    <text evidence="1">Homodimer. Heterotetramer of two MnmE and two MnmG subunits.</text>
</comment>
<comment type="subcellular location">
    <subcellularLocation>
        <location evidence="1">Cytoplasm</location>
    </subcellularLocation>
</comment>
<comment type="similarity">
    <text evidence="1">Belongs to the TRAFAC class TrmE-Era-EngA-EngB-Septin-like GTPase superfamily. TrmE GTPase family.</text>
</comment>
<comment type="sequence caution" evidence="2">
    <conflict type="erroneous initiation">
        <sequence resource="EMBL-CDS" id="ABA90377"/>
    </conflict>
</comment>
<sequence>MINDDTIVAPATAPGEGGIGIVRLSGSGAEKLLLKFFSPRRFCERLDSHFLYYGKFTDETGKIVDEVMAVIMRKPRSYTREDVVEIHCHGGGLLVRSIIDVFLAAGARLARPGEFTLRAFLNGRIDLTQAEAVIDLIRSRSNLASDVALSQLEGRLAQQIGVFGQVIADLLAQVEAAIDFPEEDIELDDQQMLGASAGALIADMDRIIDTFESGRVLREGLRVLIFGKPNVGKSSLMNGLLGEARAIVTDIPGTTRDTIEEDLVLGGLPLRIVDTAGIRNTLDPVEEEGVRRARSKVESADLVLLVIDGSQEMGEDDLLALEFCRNREVLVVINKCDLATLPISSALDGLPYVRTSVLEKNGLDGLVSAIQERFVHNAHVAENRETVVLTQRRHRQALVKARQSLGRFRETLVQGMSPEFGAVELRDALDAVGEITGETTPDDILERIFTRFCIGK</sequence>
<feature type="chain" id="PRO_0000345865" description="tRNA modification GTPase MnmE">
    <location>
        <begin position="1"/>
        <end position="456"/>
    </location>
</feature>
<feature type="domain" description="TrmE-type G">
    <location>
        <begin position="220"/>
        <end position="375"/>
    </location>
</feature>
<feature type="binding site" evidence="1">
    <location>
        <position position="23"/>
    </location>
    <ligand>
        <name>(6S)-5-formyl-5,6,7,8-tetrahydrofolate</name>
        <dbReference type="ChEBI" id="CHEBI:57457"/>
    </ligand>
</feature>
<feature type="binding site" evidence="1">
    <location>
        <position position="85"/>
    </location>
    <ligand>
        <name>(6S)-5-formyl-5,6,7,8-tetrahydrofolate</name>
        <dbReference type="ChEBI" id="CHEBI:57457"/>
    </ligand>
</feature>
<feature type="binding site" evidence="1">
    <location>
        <position position="124"/>
    </location>
    <ligand>
        <name>(6S)-5-formyl-5,6,7,8-tetrahydrofolate</name>
        <dbReference type="ChEBI" id="CHEBI:57457"/>
    </ligand>
</feature>
<feature type="binding site" evidence="1">
    <location>
        <begin position="230"/>
        <end position="235"/>
    </location>
    <ligand>
        <name>GTP</name>
        <dbReference type="ChEBI" id="CHEBI:37565"/>
    </ligand>
</feature>
<feature type="binding site" evidence="1">
    <location>
        <position position="230"/>
    </location>
    <ligand>
        <name>K(+)</name>
        <dbReference type="ChEBI" id="CHEBI:29103"/>
    </ligand>
</feature>
<feature type="binding site" evidence="1">
    <location>
        <position position="234"/>
    </location>
    <ligand>
        <name>Mg(2+)</name>
        <dbReference type="ChEBI" id="CHEBI:18420"/>
    </ligand>
</feature>
<feature type="binding site" evidence="1">
    <location>
        <begin position="249"/>
        <end position="255"/>
    </location>
    <ligand>
        <name>GTP</name>
        <dbReference type="ChEBI" id="CHEBI:37565"/>
    </ligand>
</feature>
<feature type="binding site" evidence="1">
    <location>
        <position position="249"/>
    </location>
    <ligand>
        <name>K(+)</name>
        <dbReference type="ChEBI" id="CHEBI:29103"/>
    </ligand>
</feature>
<feature type="binding site" evidence="1">
    <location>
        <position position="251"/>
    </location>
    <ligand>
        <name>K(+)</name>
        <dbReference type="ChEBI" id="CHEBI:29103"/>
    </ligand>
</feature>
<feature type="binding site" evidence="1">
    <location>
        <position position="254"/>
    </location>
    <ligand>
        <name>K(+)</name>
        <dbReference type="ChEBI" id="CHEBI:29103"/>
    </ligand>
</feature>
<feature type="binding site" evidence="1">
    <location>
        <position position="255"/>
    </location>
    <ligand>
        <name>Mg(2+)</name>
        <dbReference type="ChEBI" id="CHEBI:18420"/>
    </ligand>
</feature>
<feature type="binding site" evidence="1">
    <location>
        <begin position="274"/>
        <end position="277"/>
    </location>
    <ligand>
        <name>GTP</name>
        <dbReference type="ChEBI" id="CHEBI:37565"/>
    </ligand>
</feature>
<feature type="binding site" evidence="1">
    <location>
        <position position="456"/>
    </location>
    <ligand>
        <name>(6S)-5-formyl-5,6,7,8-tetrahydrofolate</name>
        <dbReference type="ChEBI" id="CHEBI:57457"/>
    </ligand>
</feature>